<comment type="function">
    <text evidence="1">Catalyzes the phosphorylation of D-fructose 6-phosphate to fructose 1,6-bisphosphate by ATP, the first committing step of glycolysis.</text>
</comment>
<comment type="catalytic activity">
    <reaction evidence="1">
        <text>beta-D-fructose 6-phosphate + ATP = beta-D-fructose 1,6-bisphosphate + ADP + H(+)</text>
        <dbReference type="Rhea" id="RHEA:16109"/>
        <dbReference type="ChEBI" id="CHEBI:15378"/>
        <dbReference type="ChEBI" id="CHEBI:30616"/>
        <dbReference type="ChEBI" id="CHEBI:32966"/>
        <dbReference type="ChEBI" id="CHEBI:57634"/>
        <dbReference type="ChEBI" id="CHEBI:456216"/>
        <dbReference type="EC" id="2.7.1.11"/>
    </reaction>
</comment>
<comment type="cofactor">
    <cofactor evidence="1">
        <name>Mg(2+)</name>
        <dbReference type="ChEBI" id="CHEBI:18420"/>
    </cofactor>
</comment>
<comment type="activity regulation">
    <text evidence="1">Allosterically activated by ADP and other diphosphonucleosides, and allosterically inhibited by phosphoenolpyruvate.</text>
</comment>
<comment type="pathway">
    <text evidence="1">Carbohydrate degradation; glycolysis; D-glyceraldehyde 3-phosphate and glycerone phosphate from D-glucose: step 3/4.</text>
</comment>
<comment type="subunit">
    <text evidence="1">Homotetramer.</text>
</comment>
<comment type="subcellular location">
    <subcellularLocation>
        <location evidence="1">Cytoplasm</location>
    </subcellularLocation>
</comment>
<comment type="similarity">
    <text evidence="1">Belongs to the phosphofructokinase type A (PFKA) family. ATP-dependent PFK group I subfamily. Prokaryotic clade 'B1' sub-subfamily.</text>
</comment>
<reference key="1">
    <citation type="journal article" date="2005" name="Nucleic Acids Res.">
        <title>Genome dynamics and diversity of Shigella species, the etiologic agents of bacillary dysentery.</title>
        <authorList>
            <person name="Yang F."/>
            <person name="Yang J."/>
            <person name="Zhang X."/>
            <person name="Chen L."/>
            <person name="Jiang Y."/>
            <person name="Yan Y."/>
            <person name="Tang X."/>
            <person name="Wang J."/>
            <person name="Xiong Z."/>
            <person name="Dong J."/>
            <person name="Xue Y."/>
            <person name="Zhu Y."/>
            <person name="Xu X."/>
            <person name="Sun L."/>
            <person name="Chen S."/>
            <person name="Nie H."/>
            <person name="Peng J."/>
            <person name="Xu J."/>
            <person name="Wang Y."/>
            <person name="Yuan Z."/>
            <person name="Wen Y."/>
            <person name="Yao Z."/>
            <person name="Shen Y."/>
            <person name="Qiang B."/>
            <person name="Hou Y."/>
            <person name="Yu J."/>
            <person name="Jin Q."/>
        </authorList>
    </citation>
    <scope>NUCLEOTIDE SEQUENCE [LARGE SCALE GENOMIC DNA]</scope>
    <source>
        <strain>Ss046</strain>
    </source>
</reference>
<proteinExistence type="inferred from homology"/>
<protein>
    <recommendedName>
        <fullName evidence="1">ATP-dependent 6-phosphofructokinase isozyme 1</fullName>
        <shortName evidence="1">ATP-PFK 1</shortName>
        <shortName evidence="1">Phosphofructokinase 1</shortName>
        <ecNumber evidence="1">2.7.1.11</ecNumber>
    </recommendedName>
    <alternativeName>
        <fullName>6-phosphofructokinase isozyme I</fullName>
    </alternativeName>
    <alternativeName>
        <fullName evidence="1">Phosphohexokinase 1</fullName>
    </alternativeName>
</protein>
<sequence>MIKKIGVLTSGGDAPGMNAAIRGVVRSALTEGLEVMGIYDGYLGLYEDRMVQLDRYSVSDMINRGGTFLGSARFPEFRDENIRAVAIENLKKRGIDALVVIGGDGSYMGAMRLTEMGFPCIGLPGTIDNDIKGTDYTIGFFTALSTVVEAIDRLRDTSSSHQRISVVEVMGRYCGDLTLAAAIAGGCEFVVVPEVEFSREDLVNEIKAGIAKGKKHAIVAITEHMCDVDELAHFIEKETGRETRATVLGHIQRGGSPVPYDRILASRMGAYAIDLLLAGYGGRCVGIQNEQLVHHDIIDAIENMKRPFKGDWLDCAKKLY</sequence>
<evidence type="ECO:0000255" key="1">
    <source>
        <dbReference type="HAMAP-Rule" id="MF_00339"/>
    </source>
</evidence>
<organism>
    <name type="scientific">Shigella sonnei (strain Ss046)</name>
    <dbReference type="NCBI Taxonomy" id="300269"/>
    <lineage>
        <taxon>Bacteria</taxon>
        <taxon>Pseudomonadati</taxon>
        <taxon>Pseudomonadota</taxon>
        <taxon>Gammaproteobacteria</taxon>
        <taxon>Enterobacterales</taxon>
        <taxon>Enterobacteriaceae</taxon>
        <taxon>Shigella</taxon>
    </lineage>
</organism>
<accession>Q3YV62</accession>
<dbReference type="EC" id="2.7.1.11" evidence="1"/>
<dbReference type="EMBL" id="CP000038">
    <property type="protein sequence ID" value="AAZ90600.1"/>
    <property type="molecule type" value="Genomic_DNA"/>
</dbReference>
<dbReference type="RefSeq" id="WP_000591795.1">
    <property type="nucleotide sequence ID" value="NC_007384.1"/>
</dbReference>
<dbReference type="SMR" id="Q3YV62"/>
<dbReference type="GeneID" id="93777982"/>
<dbReference type="KEGG" id="ssn:SSON_4085"/>
<dbReference type="HOGENOM" id="CLU_020655_0_1_6"/>
<dbReference type="UniPathway" id="UPA00109">
    <property type="reaction ID" value="UER00182"/>
</dbReference>
<dbReference type="Proteomes" id="UP000002529">
    <property type="component" value="Chromosome"/>
</dbReference>
<dbReference type="GO" id="GO:0005945">
    <property type="term" value="C:6-phosphofructokinase complex"/>
    <property type="evidence" value="ECO:0007669"/>
    <property type="project" value="TreeGrafter"/>
</dbReference>
<dbReference type="GO" id="GO:0003872">
    <property type="term" value="F:6-phosphofructokinase activity"/>
    <property type="evidence" value="ECO:0007669"/>
    <property type="project" value="UniProtKB-UniRule"/>
</dbReference>
<dbReference type="GO" id="GO:0016208">
    <property type="term" value="F:AMP binding"/>
    <property type="evidence" value="ECO:0007669"/>
    <property type="project" value="TreeGrafter"/>
</dbReference>
<dbReference type="GO" id="GO:0005524">
    <property type="term" value="F:ATP binding"/>
    <property type="evidence" value="ECO:0007669"/>
    <property type="project" value="UniProtKB-KW"/>
</dbReference>
<dbReference type="GO" id="GO:0070095">
    <property type="term" value="F:fructose-6-phosphate binding"/>
    <property type="evidence" value="ECO:0007669"/>
    <property type="project" value="TreeGrafter"/>
</dbReference>
<dbReference type="GO" id="GO:0042802">
    <property type="term" value="F:identical protein binding"/>
    <property type="evidence" value="ECO:0007669"/>
    <property type="project" value="TreeGrafter"/>
</dbReference>
<dbReference type="GO" id="GO:0046872">
    <property type="term" value="F:metal ion binding"/>
    <property type="evidence" value="ECO:0007669"/>
    <property type="project" value="UniProtKB-KW"/>
</dbReference>
<dbReference type="GO" id="GO:0048029">
    <property type="term" value="F:monosaccharide binding"/>
    <property type="evidence" value="ECO:0007669"/>
    <property type="project" value="TreeGrafter"/>
</dbReference>
<dbReference type="GO" id="GO:0061621">
    <property type="term" value="P:canonical glycolysis"/>
    <property type="evidence" value="ECO:0007669"/>
    <property type="project" value="TreeGrafter"/>
</dbReference>
<dbReference type="GO" id="GO:0030388">
    <property type="term" value="P:fructose 1,6-bisphosphate metabolic process"/>
    <property type="evidence" value="ECO:0007669"/>
    <property type="project" value="TreeGrafter"/>
</dbReference>
<dbReference type="GO" id="GO:0006002">
    <property type="term" value="P:fructose 6-phosphate metabolic process"/>
    <property type="evidence" value="ECO:0007669"/>
    <property type="project" value="InterPro"/>
</dbReference>
<dbReference type="CDD" id="cd00763">
    <property type="entry name" value="Bacterial_PFK"/>
    <property type="match status" value="1"/>
</dbReference>
<dbReference type="FunFam" id="3.40.50.450:FF:000001">
    <property type="entry name" value="ATP-dependent 6-phosphofructokinase"/>
    <property type="match status" value="1"/>
</dbReference>
<dbReference type="FunFam" id="3.40.50.460:FF:000002">
    <property type="entry name" value="ATP-dependent 6-phosphofructokinase"/>
    <property type="match status" value="1"/>
</dbReference>
<dbReference type="Gene3D" id="3.40.50.450">
    <property type="match status" value="1"/>
</dbReference>
<dbReference type="Gene3D" id="3.40.50.460">
    <property type="entry name" value="Phosphofructokinase domain"/>
    <property type="match status" value="1"/>
</dbReference>
<dbReference type="HAMAP" id="MF_00339">
    <property type="entry name" value="Phosphofructokinase_I_B1"/>
    <property type="match status" value="1"/>
</dbReference>
<dbReference type="InterPro" id="IPR022953">
    <property type="entry name" value="ATP_PFK"/>
</dbReference>
<dbReference type="InterPro" id="IPR012003">
    <property type="entry name" value="ATP_PFK_prok-type"/>
</dbReference>
<dbReference type="InterPro" id="IPR012828">
    <property type="entry name" value="PFKA_ATP_prok"/>
</dbReference>
<dbReference type="InterPro" id="IPR015912">
    <property type="entry name" value="Phosphofructokinase_CS"/>
</dbReference>
<dbReference type="InterPro" id="IPR000023">
    <property type="entry name" value="Phosphofructokinase_dom"/>
</dbReference>
<dbReference type="InterPro" id="IPR035966">
    <property type="entry name" value="PKF_sf"/>
</dbReference>
<dbReference type="NCBIfam" id="TIGR02482">
    <property type="entry name" value="PFKA_ATP"/>
    <property type="match status" value="1"/>
</dbReference>
<dbReference type="NCBIfam" id="NF002872">
    <property type="entry name" value="PRK03202.1"/>
    <property type="match status" value="1"/>
</dbReference>
<dbReference type="PANTHER" id="PTHR13697:SF4">
    <property type="entry name" value="ATP-DEPENDENT 6-PHOSPHOFRUCTOKINASE"/>
    <property type="match status" value="1"/>
</dbReference>
<dbReference type="PANTHER" id="PTHR13697">
    <property type="entry name" value="PHOSPHOFRUCTOKINASE"/>
    <property type="match status" value="1"/>
</dbReference>
<dbReference type="Pfam" id="PF00365">
    <property type="entry name" value="PFK"/>
    <property type="match status" value="1"/>
</dbReference>
<dbReference type="PIRSF" id="PIRSF000532">
    <property type="entry name" value="ATP_PFK_prok"/>
    <property type="match status" value="1"/>
</dbReference>
<dbReference type="PRINTS" id="PR00476">
    <property type="entry name" value="PHFRCTKINASE"/>
</dbReference>
<dbReference type="SUPFAM" id="SSF53784">
    <property type="entry name" value="Phosphofructokinase"/>
    <property type="match status" value="1"/>
</dbReference>
<dbReference type="PROSITE" id="PS00433">
    <property type="entry name" value="PHOSPHOFRUCTOKINASE"/>
    <property type="match status" value="1"/>
</dbReference>
<name>PFKA_SHISS</name>
<feature type="chain" id="PRO_1000059790" description="ATP-dependent 6-phosphofructokinase isozyme 1">
    <location>
        <begin position="1"/>
        <end position="320"/>
    </location>
</feature>
<feature type="active site" description="Proton acceptor" evidence="1">
    <location>
        <position position="128"/>
    </location>
</feature>
<feature type="binding site" evidence="1">
    <location>
        <position position="12"/>
    </location>
    <ligand>
        <name>ATP</name>
        <dbReference type="ChEBI" id="CHEBI:30616"/>
    </ligand>
</feature>
<feature type="binding site" evidence="1">
    <location>
        <begin position="22"/>
        <end position="26"/>
    </location>
    <ligand>
        <name>ADP</name>
        <dbReference type="ChEBI" id="CHEBI:456216"/>
        <note>allosteric activator; ligand shared between dimeric partners</note>
    </ligand>
</feature>
<feature type="binding site" evidence="1">
    <location>
        <begin position="55"/>
        <end position="60"/>
    </location>
    <ligand>
        <name>ADP</name>
        <dbReference type="ChEBI" id="CHEBI:456216"/>
        <note>allosteric activator; ligand shared between dimeric partners</note>
    </ligand>
</feature>
<feature type="binding site" evidence="1">
    <location>
        <begin position="73"/>
        <end position="74"/>
    </location>
    <ligand>
        <name>ATP</name>
        <dbReference type="ChEBI" id="CHEBI:30616"/>
    </ligand>
</feature>
<feature type="binding site" evidence="1">
    <location>
        <begin position="103"/>
        <end position="106"/>
    </location>
    <ligand>
        <name>ATP</name>
        <dbReference type="ChEBI" id="CHEBI:30616"/>
    </ligand>
</feature>
<feature type="binding site" evidence="1">
    <location>
        <position position="104"/>
    </location>
    <ligand>
        <name>Mg(2+)</name>
        <dbReference type="ChEBI" id="CHEBI:18420"/>
        <note>catalytic</note>
    </ligand>
</feature>
<feature type="binding site" description="in other chain" evidence="1">
    <location>
        <begin position="126"/>
        <end position="128"/>
    </location>
    <ligand>
        <name>substrate</name>
        <note>ligand shared between dimeric partners</note>
    </ligand>
</feature>
<feature type="binding site" description="in other chain" evidence="1">
    <location>
        <position position="155"/>
    </location>
    <ligand>
        <name>ADP</name>
        <dbReference type="ChEBI" id="CHEBI:456216"/>
        <note>allosteric activator; ligand shared between dimeric partners</note>
    </ligand>
</feature>
<feature type="binding site" evidence="1">
    <location>
        <position position="163"/>
    </location>
    <ligand>
        <name>substrate</name>
        <note>ligand shared between dimeric partners</note>
    </ligand>
</feature>
<feature type="binding site" description="in other chain" evidence="1">
    <location>
        <begin position="170"/>
        <end position="172"/>
    </location>
    <ligand>
        <name>substrate</name>
        <note>ligand shared between dimeric partners</note>
    </ligand>
</feature>
<feature type="binding site" description="in other chain" evidence="1">
    <location>
        <begin position="186"/>
        <end position="188"/>
    </location>
    <ligand>
        <name>ADP</name>
        <dbReference type="ChEBI" id="CHEBI:456216"/>
        <note>allosteric activator; ligand shared between dimeric partners</note>
    </ligand>
</feature>
<feature type="binding site" description="in other chain" evidence="1">
    <location>
        <position position="212"/>
    </location>
    <ligand>
        <name>ADP</name>
        <dbReference type="ChEBI" id="CHEBI:456216"/>
        <note>allosteric activator; ligand shared between dimeric partners</note>
    </ligand>
</feature>
<feature type="binding site" description="in other chain" evidence="1">
    <location>
        <begin position="214"/>
        <end position="216"/>
    </location>
    <ligand>
        <name>ADP</name>
        <dbReference type="ChEBI" id="CHEBI:456216"/>
        <note>allosteric activator; ligand shared between dimeric partners</note>
    </ligand>
</feature>
<feature type="binding site" description="in other chain" evidence="1">
    <location>
        <position position="223"/>
    </location>
    <ligand>
        <name>substrate</name>
        <note>ligand shared between dimeric partners</note>
    </ligand>
</feature>
<feature type="binding site" evidence="1">
    <location>
        <position position="244"/>
    </location>
    <ligand>
        <name>substrate</name>
        <note>ligand shared between dimeric partners</note>
    </ligand>
</feature>
<feature type="binding site" description="in other chain" evidence="1">
    <location>
        <begin position="250"/>
        <end position="253"/>
    </location>
    <ligand>
        <name>substrate</name>
        <note>ligand shared between dimeric partners</note>
    </ligand>
</feature>
<gene>
    <name evidence="1" type="primary">pfkA</name>
    <name type="ordered locus">SSON_4085</name>
</gene>
<keyword id="KW-0021">Allosteric enzyme</keyword>
<keyword id="KW-0067">ATP-binding</keyword>
<keyword id="KW-0963">Cytoplasm</keyword>
<keyword id="KW-0324">Glycolysis</keyword>
<keyword id="KW-0418">Kinase</keyword>
<keyword id="KW-0460">Magnesium</keyword>
<keyword id="KW-0479">Metal-binding</keyword>
<keyword id="KW-0547">Nucleotide-binding</keyword>
<keyword id="KW-1185">Reference proteome</keyword>
<keyword id="KW-0808">Transferase</keyword>